<organism>
    <name type="scientific">Homo sapiens</name>
    <name type="common">Human</name>
    <dbReference type="NCBI Taxonomy" id="9606"/>
    <lineage>
        <taxon>Eukaryota</taxon>
        <taxon>Metazoa</taxon>
        <taxon>Chordata</taxon>
        <taxon>Craniata</taxon>
        <taxon>Vertebrata</taxon>
        <taxon>Euteleostomi</taxon>
        <taxon>Mammalia</taxon>
        <taxon>Eutheria</taxon>
        <taxon>Euarchontoglires</taxon>
        <taxon>Primates</taxon>
        <taxon>Haplorrhini</taxon>
        <taxon>Catarrhini</taxon>
        <taxon>Hominidae</taxon>
        <taxon>Homo</taxon>
    </lineage>
</organism>
<name>ENAH_HUMAN</name>
<dbReference type="EMBL" id="AY345143">
    <property type="protein sequence ID" value="AAR04685.1"/>
    <property type="molecule type" value="mRNA"/>
</dbReference>
<dbReference type="EMBL" id="AF519769">
    <property type="protein sequence ID" value="AAQ08487.1"/>
    <property type="molecule type" value="mRNA"/>
</dbReference>
<dbReference type="EMBL" id="EU255274">
    <property type="protein sequence ID" value="ABY78022.1"/>
    <property type="molecule type" value="mRNA"/>
</dbReference>
<dbReference type="EMBL" id="AC092811">
    <property type="status" value="NOT_ANNOTATED_CDS"/>
    <property type="molecule type" value="Genomic_DNA"/>
</dbReference>
<dbReference type="EMBL" id="AL356216">
    <property type="status" value="NOT_ANNOTATED_CDS"/>
    <property type="molecule type" value="Genomic_DNA"/>
</dbReference>
<dbReference type="EMBL" id="AL591380">
    <property type="status" value="NOT_ANNOTATED_CDS"/>
    <property type="molecule type" value="Genomic_DNA"/>
</dbReference>
<dbReference type="EMBL" id="BC065238">
    <property type="protein sequence ID" value="AAH65238.1"/>
    <property type="molecule type" value="mRNA"/>
</dbReference>
<dbReference type="EMBL" id="BC095481">
    <property type="protein sequence ID" value="AAH95481.1"/>
    <property type="molecule type" value="mRNA"/>
</dbReference>
<dbReference type="EMBL" id="AK001635">
    <property type="protein sequence ID" value="BAA91799.1"/>
    <property type="status" value="ALT_INIT"/>
    <property type="molecule type" value="mRNA"/>
</dbReference>
<dbReference type="EMBL" id="AK096246">
    <property type="protein sequence ID" value="BAC04736.1"/>
    <property type="status" value="ALT_INIT"/>
    <property type="molecule type" value="mRNA"/>
</dbReference>
<dbReference type="EMBL" id="AL133059">
    <property type="protein sequence ID" value="CAB61384.1"/>
    <property type="molecule type" value="mRNA"/>
</dbReference>
<dbReference type="CCDS" id="CCDS31040.1">
    <molecule id="Q8N8S7-2"/>
</dbReference>
<dbReference type="CCDS" id="CCDS31041.1">
    <molecule id="Q8N8S7-1"/>
</dbReference>
<dbReference type="PIR" id="T42661">
    <property type="entry name" value="T42661"/>
</dbReference>
<dbReference type="RefSeq" id="NP_001008493.1">
    <molecule id="Q8N8S7-1"/>
    <property type="nucleotide sequence ID" value="NM_001008493.3"/>
</dbReference>
<dbReference type="RefSeq" id="NP_001364412.1">
    <molecule id="Q8N8S7-3"/>
    <property type="nucleotide sequence ID" value="NM_001377483.1"/>
</dbReference>
<dbReference type="RefSeq" id="NP_060682.2">
    <molecule id="Q8N8S7-2"/>
    <property type="nucleotide sequence ID" value="NM_018212.5"/>
</dbReference>
<dbReference type="PDB" id="2HO2">
    <property type="method" value="X-ray"/>
    <property type="resolution" value="1.33 A"/>
    <property type="chains" value="B=347-356"/>
</dbReference>
<dbReference type="PDB" id="2IYB">
    <property type="method" value="X-ray"/>
    <property type="resolution" value="2.35 A"/>
    <property type="chains" value="A/B/C/D=1-113"/>
</dbReference>
<dbReference type="PDB" id="2XQN">
    <property type="method" value="X-ray"/>
    <property type="resolution" value="2.62 A"/>
    <property type="chains" value="M=1-116"/>
</dbReference>
<dbReference type="PDB" id="4MY6">
    <property type="method" value="X-ray"/>
    <property type="resolution" value="1.70 A"/>
    <property type="chains" value="A/B=1-111"/>
</dbReference>
<dbReference type="PDB" id="5N91">
    <property type="method" value="X-ray"/>
    <property type="resolution" value="1.49 A"/>
    <property type="chains" value="A/B=1-111"/>
</dbReference>
<dbReference type="PDB" id="5N9C">
    <property type="method" value="X-ray"/>
    <property type="resolution" value="1.16 A"/>
    <property type="chains" value="A/B=1-111"/>
</dbReference>
<dbReference type="PDB" id="5N9P">
    <property type="method" value="X-ray"/>
    <property type="resolution" value="1.80 A"/>
    <property type="chains" value="A/B=1-111"/>
</dbReference>
<dbReference type="PDB" id="5NAJ">
    <property type="method" value="X-ray"/>
    <property type="resolution" value="1.46 A"/>
    <property type="chains" value="A/B/C/D=1-111"/>
</dbReference>
<dbReference type="PDB" id="5NBF">
    <property type="method" value="X-ray"/>
    <property type="resolution" value="1.15 A"/>
    <property type="chains" value="A=1-111"/>
</dbReference>
<dbReference type="PDB" id="5NBX">
    <property type="method" value="X-ray"/>
    <property type="resolution" value="1.65 A"/>
    <property type="chains" value="A/B=1-111"/>
</dbReference>
<dbReference type="PDB" id="5NC2">
    <property type="method" value="X-ray"/>
    <property type="resolution" value="1.58 A"/>
    <property type="chains" value="A/B=1-111"/>
</dbReference>
<dbReference type="PDB" id="5NC7">
    <property type="method" value="X-ray"/>
    <property type="resolution" value="2.70 A"/>
    <property type="chains" value="A/B/C/D=1-111"/>
</dbReference>
<dbReference type="PDB" id="5NCF">
    <property type="method" value="X-ray"/>
    <property type="resolution" value="1.40 A"/>
    <property type="chains" value="A/B=1-111"/>
</dbReference>
<dbReference type="PDB" id="5NCG">
    <property type="method" value="X-ray"/>
    <property type="resolution" value="1.02 A"/>
    <property type="chains" value="A/B=1-111"/>
</dbReference>
<dbReference type="PDB" id="5NCP">
    <property type="method" value="X-ray"/>
    <property type="resolution" value="1.65 A"/>
    <property type="chains" value="A=1-111"/>
</dbReference>
<dbReference type="PDB" id="5ND0">
    <property type="method" value="X-ray"/>
    <property type="resolution" value="1.45 A"/>
    <property type="chains" value="A/B=1-111"/>
</dbReference>
<dbReference type="PDB" id="5NDU">
    <property type="method" value="X-ray"/>
    <property type="resolution" value="1.42 A"/>
    <property type="chains" value="A/B=1-111"/>
</dbReference>
<dbReference type="PDB" id="5NEG">
    <property type="method" value="X-ray"/>
    <property type="resolution" value="1.29 A"/>
    <property type="chains" value="A/B=1-111"/>
</dbReference>
<dbReference type="PDB" id="6RCF">
    <property type="method" value="X-ray"/>
    <property type="resolution" value="1.10 A"/>
    <property type="chains" value="A=1-111"/>
</dbReference>
<dbReference type="PDB" id="6RCJ">
    <property type="method" value="X-ray"/>
    <property type="resolution" value="1.35 A"/>
    <property type="chains" value="A=1-111"/>
</dbReference>
<dbReference type="PDB" id="6RD2">
    <property type="method" value="X-ray"/>
    <property type="resolution" value="1.00 A"/>
    <property type="chains" value="A/B=1-111"/>
</dbReference>
<dbReference type="PDB" id="6XVT">
    <property type="method" value="X-ray"/>
    <property type="resolution" value="1.40 A"/>
    <property type="chains" value="A/B=1-111"/>
</dbReference>
<dbReference type="PDB" id="6XXR">
    <property type="method" value="X-ray"/>
    <property type="resolution" value="1.48 A"/>
    <property type="chains" value="A/B=1-111"/>
</dbReference>
<dbReference type="PDB" id="7A5M">
    <property type="method" value="X-ray"/>
    <property type="resolution" value="0.78 A"/>
    <property type="chains" value="A=1-111"/>
</dbReference>
<dbReference type="PDB" id="7AKI">
    <property type="method" value="X-ray"/>
    <property type="resolution" value="1.36 A"/>
    <property type="chains" value="A=1-111"/>
</dbReference>
<dbReference type="PDB" id="7LXE">
    <property type="method" value="X-ray"/>
    <property type="resolution" value="1.88 A"/>
    <property type="chains" value="A=1-111"/>
</dbReference>
<dbReference type="PDB" id="9C66">
    <property type="method" value="X-ray"/>
    <property type="resolution" value="1.40 A"/>
    <property type="chains" value="A=1-113"/>
</dbReference>
<dbReference type="PDBsum" id="2HO2"/>
<dbReference type="PDBsum" id="2IYB"/>
<dbReference type="PDBsum" id="2XQN"/>
<dbReference type="PDBsum" id="4MY6"/>
<dbReference type="PDBsum" id="5N91"/>
<dbReference type="PDBsum" id="5N9C"/>
<dbReference type="PDBsum" id="5N9P"/>
<dbReference type="PDBsum" id="5NAJ"/>
<dbReference type="PDBsum" id="5NBF"/>
<dbReference type="PDBsum" id="5NBX"/>
<dbReference type="PDBsum" id="5NC2"/>
<dbReference type="PDBsum" id="5NC7"/>
<dbReference type="PDBsum" id="5NCF"/>
<dbReference type="PDBsum" id="5NCG"/>
<dbReference type="PDBsum" id="5NCP"/>
<dbReference type="PDBsum" id="5ND0"/>
<dbReference type="PDBsum" id="5NDU"/>
<dbReference type="PDBsum" id="5NEG"/>
<dbReference type="PDBsum" id="6RCF"/>
<dbReference type="PDBsum" id="6RCJ"/>
<dbReference type="PDBsum" id="6RD2"/>
<dbReference type="PDBsum" id="6XVT"/>
<dbReference type="PDBsum" id="6XXR"/>
<dbReference type="PDBsum" id="7A5M"/>
<dbReference type="PDBsum" id="7AKI"/>
<dbReference type="PDBsum" id="7LXE"/>
<dbReference type="PDBsum" id="9C66"/>
<dbReference type="SMR" id="Q8N8S7"/>
<dbReference type="BioGRID" id="120858">
    <property type="interactions" value="154"/>
</dbReference>
<dbReference type="CORUM" id="Q8N8S7"/>
<dbReference type="ELM" id="Q8N8S7"/>
<dbReference type="FunCoup" id="Q8N8S7">
    <property type="interactions" value="834"/>
</dbReference>
<dbReference type="IntAct" id="Q8N8S7">
    <property type="interactions" value="51"/>
</dbReference>
<dbReference type="MINT" id="Q8N8S7"/>
<dbReference type="STRING" id="9606.ENSP00000355809"/>
<dbReference type="CarbonylDB" id="Q8N8S7"/>
<dbReference type="GlyCosmos" id="Q8N8S7">
    <property type="glycosylation" value="1 site, 1 glycan"/>
</dbReference>
<dbReference type="GlyGen" id="Q8N8S7">
    <property type="glycosylation" value="9 sites, 3 N-linked glycans (3 sites), 1 O-linked glycan (6 sites)"/>
</dbReference>
<dbReference type="iPTMnet" id="Q8N8S7"/>
<dbReference type="MetOSite" id="Q8N8S7"/>
<dbReference type="PhosphoSitePlus" id="Q8N8S7"/>
<dbReference type="SwissPalm" id="Q8N8S7"/>
<dbReference type="BioMuta" id="ENAH"/>
<dbReference type="DMDM" id="48428086"/>
<dbReference type="jPOST" id="Q8N8S7"/>
<dbReference type="MassIVE" id="Q8N8S7"/>
<dbReference type="PaxDb" id="9606-ENSP00000355809"/>
<dbReference type="PeptideAtlas" id="Q8N8S7"/>
<dbReference type="ProteomicsDB" id="72457">
    <molecule id="Q8N8S7-1"/>
</dbReference>
<dbReference type="ProteomicsDB" id="72458">
    <molecule id="Q8N8S7-2"/>
</dbReference>
<dbReference type="Pumba" id="Q8N8S7"/>
<dbReference type="Antibodypedia" id="34644">
    <property type="antibodies" value="215 antibodies from 33 providers"/>
</dbReference>
<dbReference type="DNASU" id="55740"/>
<dbReference type="Ensembl" id="ENST00000366843.7">
    <molecule id="Q8N8S7-2"/>
    <property type="protein sequence ID" value="ENSP00000355808.2"/>
    <property type="gene ID" value="ENSG00000154380.19"/>
</dbReference>
<dbReference type="Ensembl" id="ENST00000366844.7">
    <molecule id="Q8N8S7-1"/>
    <property type="protein sequence ID" value="ENSP00000355809.2"/>
    <property type="gene ID" value="ENSG00000154380.19"/>
</dbReference>
<dbReference type="GeneID" id="55740"/>
<dbReference type="KEGG" id="hsa:55740"/>
<dbReference type="MANE-Select" id="ENST00000366843.7">
    <molecule id="Q8N8S7-2"/>
    <property type="protein sequence ID" value="ENSP00000355808.2"/>
    <property type="RefSeq nucleotide sequence ID" value="NM_018212.6"/>
    <property type="RefSeq protein sequence ID" value="NP_060682.2"/>
</dbReference>
<dbReference type="UCSC" id="uc001hpc.2">
    <molecule id="Q8N8S7-1"/>
    <property type="organism name" value="human"/>
</dbReference>
<dbReference type="AGR" id="HGNC:18271"/>
<dbReference type="CTD" id="55740"/>
<dbReference type="DisGeNET" id="55740"/>
<dbReference type="GeneCards" id="ENAH"/>
<dbReference type="HGNC" id="HGNC:18271">
    <property type="gene designation" value="ENAH"/>
</dbReference>
<dbReference type="HPA" id="ENSG00000154380">
    <property type="expression patterns" value="Low tissue specificity"/>
</dbReference>
<dbReference type="MalaCards" id="ENAH"/>
<dbReference type="MIM" id="609061">
    <property type="type" value="gene"/>
</dbReference>
<dbReference type="neXtProt" id="NX_Q8N8S7"/>
<dbReference type="OpenTargets" id="ENSG00000154380"/>
<dbReference type="PharmGKB" id="PA38517"/>
<dbReference type="VEuPathDB" id="HostDB:ENSG00000154380"/>
<dbReference type="eggNOG" id="KOG4590">
    <property type="taxonomic scope" value="Eukaryota"/>
</dbReference>
<dbReference type="GeneTree" id="ENSGT00940000157376"/>
<dbReference type="HOGENOM" id="CLU_017790_1_1_1"/>
<dbReference type="InParanoid" id="Q8N8S7"/>
<dbReference type="OrthoDB" id="31170at2759"/>
<dbReference type="PAN-GO" id="Q8N8S7">
    <property type="GO annotations" value="5 GO annotations based on evolutionary models"/>
</dbReference>
<dbReference type="PhylomeDB" id="Q8N8S7"/>
<dbReference type="TreeFam" id="TF321411"/>
<dbReference type="PathwayCommons" id="Q8N8S7"/>
<dbReference type="Reactome" id="R-HSA-202433">
    <property type="pathway name" value="Generation of second messenger molecules"/>
</dbReference>
<dbReference type="Reactome" id="R-HSA-376176">
    <property type="pathway name" value="Signaling by ROBO receptors"/>
</dbReference>
<dbReference type="SignaLink" id="Q8N8S7"/>
<dbReference type="SIGNOR" id="Q8N8S7"/>
<dbReference type="BioGRID-ORCS" id="55740">
    <property type="hits" value="37 hits in 1154 CRISPR screens"/>
</dbReference>
<dbReference type="ChiTaRS" id="ENAH">
    <property type="organism name" value="human"/>
</dbReference>
<dbReference type="EvolutionaryTrace" id="Q8N8S7"/>
<dbReference type="GeneWiki" id="ENAH_(gene)"/>
<dbReference type="GenomeRNAi" id="55740"/>
<dbReference type="Pharos" id="Q8N8S7">
    <property type="development level" value="Tbio"/>
</dbReference>
<dbReference type="PRO" id="PR:Q8N8S7"/>
<dbReference type="Proteomes" id="UP000005640">
    <property type="component" value="Chromosome 1"/>
</dbReference>
<dbReference type="RNAct" id="Q8N8S7">
    <property type="molecule type" value="protein"/>
</dbReference>
<dbReference type="Bgee" id="ENSG00000154380">
    <property type="expression patterns" value="Expressed in saphenous vein and 207 other cell types or tissues"/>
</dbReference>
<dbReference type="ExpressionAtlas" id="Q8N8S7">
    <property type="expression patterns" value="baseline and differential"/>
</dbReference>
<dbReference type="GO" id="GO:0005856">
    <property type="term" value="C:cytoskeleton"/>
    <property type="evidence" value="ECO:0007669"/>
    <property type="project" value="UniProtKB-SubCell"/>
</dbReference>
<dbReference type="GO" id="GO:0005829">
    <property type="term" value="C:cytosol"/>
    <property type="evidence" value="ECO:0000314"/>
    <property type="project" value="HPA"/>
</dbReference>
<dbReference type="GO" id="GO:0030175">
    <property type="term" value="C:filopodium"/>
    <property type="evidence" value="ECO:0007669"/>
    <property type="project" value="UniProtKB-SubCell"/>
</dbReference>
<dbReference type="GO" id="GO:0005925">
    <property type="term" value="C:focal adhesion"/>
    <property type="evidence" value="ECO:0000314"/>
    <property type="project" value="HPA"/>
</dbReference>
<dbReference type="GO" id="GO:0098982">
    <property type="term" value="C:GABA-ergic synapse"/>
    <property type="evidence" value="ECO:0007669"/>
    <property type="project" value="Ensembl"/>
</dbReference>
<dbReference type="GO" id="GO:0030027">
    <property type="term" value="C:lamellipodium"/>
    <property type="evidence" value="ECO:0007669"/>
    <property type="project" value="UniProtKB-SubCell"/>
</dbReference>
<dbReference type="GO" id="GO:0005886">
    <property type="term" value="C:plasma membrane"/>
    <property type="evidence" value="ECO:0000314"/>
    <property type="project" value="HPA"/>
</dbReference>
<dbReference type="GO" id="GO:0098794">
    <property type="term" value="C:postsynapse"/>
    <property type="evidence" value="ECO:0007669"/>
    <property type="project" value="Ensembl"/>
</dbReference>
<dbReference type="GO" id="GO:0003779">
    <property type="term" value="F:actin binding"/>
    <property type="evidence" value="ECO:0007669"/>
    <property type="project" value="UniProtKB-KW"/>
</dbReference>
<dbReference type="GO" id="GO:0005522">
    <property type="term" value="F:profilin binding"/>
    <property type="evidence" value="ECO:0000318"/>
    <property type="project" value="GO_Central"/>
</dbReference>
<dbReference type="GO" id="GO:0017124">
    <property type="term" value="F:SH3 domain binding"/>
    <property type="evidence" value="ECO:0007669"/>
    <property type="project" value="UniProtKB-KW"/>
</dbReference>
<dbReference type="GO" id="GO:0050699">
    <property type="term" value="F:WW domain binding"/>
    <property type="evidence" value="ECO:0000353"/>
    <property type="project" value="UniProtKB"/>
</dbReference>
<dbReference type="GO" id="GO:0008154">
    <property type="term" value="P:actin polymerization or depolymerization"/>
    <property type="evidence" value="ECO:0000318"/>
    <property type="project" value="GO_Central"/>
</dbReference>
<dbReference type="GO" id="GO:0070358">
    <property type="term" value="P:actin polymerization-dependent cell motility"/>
    <property type="evidence" value="ECO:0000318"/>
    <property type="project" value="GO_Central"/>
</dbReference>
<dbReference type="GO" id="GO:0007411">
    <property type="term" value="P:axon guidance"/>
    <property type="evidence" value="ECO:0000318"/>
    <property type="project" value="GO_Central"/>
</dbReference>
<dbReference type="GO" id="GO:0099188">
    <property type="term" value="P:postsynaptic cytoskeleton organization"/>
    <property type="evidence" value="ECO:0007669"/>
    <property type="project" value="Ensembl"/>
</dbReference>
<dbReference type="CDD" id="cd01207">
    <property type="entry name" value="EVH1_Ena_VASP-like"/>
    <property type="match status" value="1"/>
</dbReference>
<dbReference type="CDD" id="cd22185">
    <property type="entry name" value="WH2_hVASP-like"/>
    <property type="match status" value="1"/>
</dbReference>
<dbReference type="FunFam" id="1.20.5.1160:FF:000003">
    <property type="entry name" value="protein enabled homolog isoform X2"/>
    <property type="match status" value="1"/>
</dbReference>
<dbReference type="FunFam" id="2.30.29.30:FF:000047">
    <property type="entry name" value="vasodilator-stimulated phosphoprotein isoform X2"/>
    <property type="match status" value="1"/>
</dbReference>
<dbReference type="Gene3D" id="2.30.29.30">
    <property type="entry name" value="Pleckstrin-homology domain (PH domain)/Phosphotyrosine-binding domain (PTB)"/>
    <property type="match status" value="1"/>
</dbReference>
<dbReference type="Gene3D" id="1.20.5.1160">
    <property type="entry name" value="Vasodilator-stimulated phosphoprotein"/>
    <property type="match status" value="1"/>
</dbReference>
<dbReference type="InterPro" id="IPR011993">
    <property type="entry name" value="PH-like_dom_sf"/>
</dbReference>
<dbReference type="InterPro" id="IPR038023">
    <property type="entry name" value="VASP_sf"/>
</dbReference>
<dbReference type="InterPro" id="IPR014885">
    <property type="entry name" value="VASP_tetra"/>
</dbReference>
<dbReference type="InterPro" id="IPR000697">
    <property type="entry name" value="WH1/EVH1_dom"/>
</dbReference>
<dbReference type="PANTHER" id="PTHR11202:SF1">
    <property type="entry name" value="PROTEIN ENABLED HOMOLOG"/>
    <property type="match status" value="1"/>
</dbReference>
<dbReference type="PANTHER" id="PTHR11202">
    <property type="entry name" value="SPROUTY-RELATED, EVH1 DOMAIN-CONTAINING PROTEIN FAMILY MEMBER"/>
    <property type="match status" value="1"/>
</dbReference>
<dbReference type="Pfam" id="PF08776">
    <property type="entry name" value="VASP_tetra"/>
    <property type="match status" value="1"/>
</dbReference>
<dbReference type="Pfam" id="PF00568">
    <property type="entry name" value="WH1"/>
    <property type="match status" value="1"/>
</dbReference>
<dbReference type="PRINTS" id="PR01217">
    <property type="entry name" value="PRICHEXTENSN"/>
</dbReference>
<dbReference type="SMART" id="SM00461">
    <property type="entry name" value="WH1"/>
    <property type="match status" value="1"/>
</dbReference>
<dbReference type="SUPFAM" id="SSF50729">
    <property type="entry name" value="PH domain-like"/>
    <property type="match status" value="1"/>
</dbReference>
<dbReference type="SUPFAM" id="SSF118370">
    <property type="entry name" value="Vasodilator-stimulated phosphoprotein, VASP, tetramerisation domain"/>
    <property type="match status" value="1"/>
</dbReference>
<dbReference type="PROSITE" id="PS50229">
    <property type="entry name" value="WH1"/>
    <property type="match status" value="1"/>
</dbReference>
<sequence length="591" mass="66510">MSEQSICQARAAVMVYDDANKKWVPAGGSTGFSRVHIYHHTGNNTFRVVGRKIQDHQVVINCAIPKGLKYNQATQTFHQWRDARQVYGLNFGSKEDANVFASAMMHALEVLNSQETGPTLPRQNSQLPAQVQNGPSQEELEIQRRQLQEQQRQKELERERLERERMERERLERERLERERLERERLEQEQLERERQERERQERLERQERLERQERLERQERLDRERQERQERERLERLERERQERERQEQLEREQLEWERERRISSAAAPASVETPLNSVLGDSSASEPGLQAASQPAETPSQQGIVLGPLAPPPPPPLPPGPAQASVALPPPPGPPPPPPLPSTGPPPPPPPPPLPNQVPPPPPPPPAPPLPASGFFLASMSEDNRPLTGLAAAIAGAKLRKVSRMEDTSFPSGGNAIGVNSASSKTDTGRGNGPLPLGGSGLMEEMSALLARRRRIAEKGSTIETEQKEDKGEDSEPVTSKASSTSTPEPTRKPWERTNTMNGSKSPVISRRDSPRKNQIVFDNRSYDSLHRPKSTPLSQPSANGVQTEGLDYDRLKQDILDEMRKELTKLKEELIDAIRQELSKSNTA</sequence>
<feature type="chain" id="PRO_0000086971" description="Protein enabled homolog">
    <location>
        <begin position="1"/>
        <end position="591"/>
    </location>
</feature>
<feature type="domain" description="WH1" evidence="4">
    <location>
        <begin position="1"/>
        <end position="111"/>
    </location>
</feature>
<feature type="repeat" description="1">
    <location>
        <begin position="156"/>
        <end position="160"/>
    </location>
</feature>
<feature type="repeat" description="2">
    <location>
        <begin position="161"/>
        <end position="165"/>
    </location>
</feature>
<feature type="repeat" description="3">
    <location>
        <begin position="166"/>
        <end position="170"/>
    </location>
</feature>
<feature type="repeat" description="4">
    <location>
        <begin position="171"/>
        <end position="175"/>
    </location>
</feature>
<feature type="repeat" description="5">
    <location>
        <begin position="176"/>
        <end position="180"/>
    </location>
</feature>
<feature type="repeat" description="6">
    <location>
        <begin position="181"/>
        <end position="185"/>
    </location>
</feature>
<feature type="repeat" description="7">
    <location>
        <begin position="186"/>
        <end position="190"/>
    </location>
</feature>
<feature type="repeat" description="8">
    <location>
        <begin position="191"/>
        <end position="195"/>
    </location>
</feature>
<feature type="repeat" description="9">
    <location>
        <begin position="196"/>
        <end position="200"/>
    </location>
</feature>
<feature type="region of interest" description="Disordered" evidence="5">
    <location>
        <begin position="115"/>
        <end position="146"/>
    </location>
</feature>
<feature type="region of interest" description="9 X 5 AA tandem repeats of [LMQ]-E-[QR]-E-[QR]">
    <location>
        <begin position="156"/>
        <end position="200"/>
    </location>
</feature>
<feature type="region of interest" description="Disordered" evidence="5">
    <location>
        <begin position="221"/>
        <end position="379"/>
    </location>
</feature>
<feature type="region of interest" description="EVH2">
    <location>
        <begin position="391"/>
        <end position="588"/>
    </location>
</feature>
<feature type="region of interest" description="EVH2 block A">
    <location>
        <begin position="391"/>
        <end position="411"/>
    </location>
</feature>
<feature type="region of interest" description="Disordered" evidence="5">
    <location>
        <begin position="405"/>
        <end position="549"/>
    </location>
</feature>
<feature type="region of interest" description="EVH2 block B">
    <location>
        <begin position="442"/>
        <end position="459"/>
    </location>
</feature>
<feature type="region of interest" description="EVH2 block C">
    <location>
        <begin position="554"/>
        <end position="588"/>
    </location>
</feature>
<feature type="coiled-coil region" evidence="3">
    <location>
        <begin position="135"/>
        <end position="265"/>
    </location>
</feature>
<feature type="coiled-coil region" evidence="3">
    <location>
        <begin position="557"/>
        <end position="587"/>
    </location>
</feature>
<feature type="short sequence motif" description="KLKR">
    <location>
        <begin position="400"/>
        <end position="403"/>
    </location>
</feature>
<feature type="compositionally biased region" description="Polar residues" evidence="5">
    <location>
        <begin position="115"/>
        <end position="136"/>
    </location>
</feature>
<feature type="compositionally biased region" description="Basic and acidic residues" evidence="5">
    <location>
        <begin position="221"/>
        <end position="264"/>
    </location>
</feature>
<feature type="compositionally biased region" description="Polar residues" evidence="5">
    <location>
        <begin position="275"/>
        <end position="305"/>
    </location>
</feature>
<feature type="compositionally biased region" description="Pro residues" evidence="5">
    <location>
        <begin position="311"/>
        <end position="323"/>
    </location>
</feature>
<feature type="compositionally biased region" description="Pro residues" evidence="5">
    <location>
        <begin position="330"/>
        <end position="373"/>
    </location>
</feature>
<feature type="compositionally biased region" description="Gly residues" evidence="5">
    <location>
        <begin position="432"/>
        <end position="443"/>
    </location>
</feature>
<feature type="compositionally biased region" description="Polar residues" evidence="5">
    <location>
        <begin position="479"/>
        <end position="491"/>
    </location>
</feature>
<feature type="compositionally biased region" description="Polar residues" evidence="5">
    <location>
        <begin position="499"/>
        <end position="509"/>
    </location>
</feature>
<feature type="compositionally biased region" description="Polar residues" evidence="5">
    <location>
        <begin position="538"/>
        <end position="549"/>
    </location>
</feature>
<feature type="modified residue" description="Phosphoserine" evidence="21 22 23 25">
    <location>
        <position position="125"/>
    </location>
</feature>
<feature type="modified residue" description="Phosphoserine; by PKA" evidence="2">
    <location>
        <position position="265"/>
    </location>
</feature>
<feature type="modified residue" description="Phosphoserine" evidence="22 23">
    <location>
        <position position="506"/>
    </location>
</feature>
<feature type="modified residue" description="Phosphoserine" evidence="22 23">
    <location>
        <position position="508"/>
    </location>
</feature>
<feature type="splice variant" id="VSP_053772" description="In isoform 3." evidence="18">
    <location>
        <begin position="268"/>
        <end position="304"/>
    </location>
</feature>
<feature type="splice variant" id="VSP_053773" description="In isoform 3." evidence="18">
    <location>
        <begin position="513"/>
        <end position="533"/>
    </location>
</feature>
<feature type="splice variant" id="VSP_010564" description="In isoform 2." evidence="15 16 17 19">
    <location>
        <begin position="514"/>
        <end position="534"/>
    </location>
</feature>
<feature type="sequence conflict" description="In Ref. 5; AAH95481." evidence="20" ref="5">
    <original>T</original>
    <variation>I</variation>
    <location>
        <position position="493"/>
    </location>
</feature>
<feature type="strand" evidence="27">
    <location>
        <begin position="3"/>
        <end position="17"/>
    </location>
</feature>
<feature type="turn" evidence="27">
    <location>
        <begin position="18"/>
        <end position="21"/>
    </location>
</feature>
<feature type="strand" evidence="27">
    <location>
        <begin position="22"/>
        <end position="25"/>
    </location>
</feature>
<feature type="helix" evidence="27">
    <location>
        <begin position="26"/>
        <end position="28"/>
    </location>
</feature>
<feature type="strand" evidence="27">
    <location>
        <begin position="32"/>
        <end position="40"/>
    </location>
</feature>
<feature type="turn" evidence="27">
    <location>
        <begin position="41"/>
        <end position="44"/>
    </location>
</feature>
<feature type="strand" evidence="27">
    <location>
        <begin position="45"/>
        <end position="52"/>
    </location>
</feature>
<feature type="turn" evidence="27">
    <location>
        <begin position="53"/>
        <end position="55"/>
    </location>
</feature>
<feature type="strand" evidence="27">
    <location>
        <begin position="58"/>
        <end position="64"/>
    </location>
</feature>
<feature type="strand" evidence="27">
    <location>
        <begin position="70"/>
        <end position="72"/>
    </location>
</feature>
<feature type="strand" evidence="27">
    <location>
        <begin position="74"/>
        <end position="81"/>
    </location>
</feature>
<feature type="strand" evidence="28">
    <location>
        <begin position="82"/>
        <end position="85"/>
    </location>
</feature>
<feature type="strand" evidence="27">
    <location>
        <begin position="86"/>
        <end position="93"/>
    </location>
</feature>
<feature type="helix" evidence="27">
    <location>
        <begin position="94"/>
        <end position="110"/>
    </location>
</feature>
<feature type="modified residue" description="Phosphothreonine" evidence="22">
    <location sequence="Q8N8S7-2">
        <position position="502"/>
    </location>
</feature>
<feature type="modified residue" description="Phosphoserine" evidence="26">
    <location sequence="Q8N8S7-2">
        <position position="508"/>
    </location>
</feature>
<feature type="modified residue" description="Phosphoserine" evidence="24">
    <location sequence="Q8N8S7-2">
        <position position="512"/>
    </location>
</feature>
<feature type="modified residue" description="Phosphothreonine" evidence="22">
    <location sequence="Q8N8S7-3">
        <position position="465"/>
    </location>
</feature>
<feature type="modified residue" description="Phosphoserine" evidence="26">
    <location sequence="Q8N8S7-3">
        <position position="471"/>
    </location>
</feature>
<feature type="modified residue" description="Phosphoserine" evidence="24">
    <location sequence="Q8N8S7-3">
        <position position="475"/>
    </location>
</feature>
<protein>
    <recommendedName>
        <fullName>Protein enabled homolog</fullName>
    </recommendedName>
</protein>
<reference key="1">
    <citation type="submission" date="2003-07" db="EMBL/GenBank/DDBJ databases">
        <title>Human Mena: cDNA cloning, expression and promoter characterization.</title>
        <authorList>
            <person name="Urbanelli L."/>
        </authorList>
    </citation>
    <scope>NUCLEOTIDE SEQUENCE [MRNA] (ISOFORM 2)</scope>
</reference>
<reference key="2">
    <citation type="journal article" date="2004" name="Int. J. Cancer">
        <title>Human Mena protein, a serex-defined antigen overexpressed in breast cancer eliciting both humoral and CD8+ T-cell immune response.</title>
        <authorList>
            <person name="Di Modugno F."/>
            <person name="Bronzi G."/>
            <person name="Scanlan M.J."/>
            <person name="Del Bello D."/>
            <person name="Cascioli S."/>
            <person name="Venturo I."/>
            <person name="Botti C."/>
            <person name="Nicotra M.R."/>
            <person name="Mottolese M."/>
            <person name="Natali P.G."/>
            <person name="Santoni A."/>
            <person name="Jager E."/>
            <person name="Nistico P."/>
        </authorList>
    </citation>
    <scope>NUCLEOTIDE SEQUENCE [MRNA] (ISOFORM 1)</scope>
    <scope>TISSUE SPECIFICITY</scope>
    <source>
        <tissue>Mammary tumor</tissue>
    </source>
</reference>
<reference key="3">
    <citation type="journal article" date="2012" name="Proc. Natl. Acad. Sci. U.S.A.">
        <title>Splicing program of human MENA produces a previously undescribed isoform associated with invasive, mesenchymal-like breast tumors.</title>
        <authorList>
            <person name="Di Modugno F."/>
            <person name="Iapicca P."/>
            <person name="Boudreau A."/>
            <person name="Mottolese M."/>
            <person name="Terrenato I."/>
            <person name="Perracchio L."/>
            <person name="Carstens R.P."/>
            <person name="Santoni A."/>
            <person name="Bissell M.J."/>
            <person name="Nistico P."/>
        </authorList>
    </citation>
    <scope>NUCLEOTIDE SEQUENCE [MRNA] (ISOFORM 3)</scope>
</reference>
<reference key="4">
    <citation type="journal article" date="2006" name="Nature">
        <title>The DNA sequence and biological annotation of human chromosome 1.</title>
        <authorList>
            <person name="Gregory S.G."/>
            <person name="Barlow K.F."/>
            <person name="McLay K.E."/>
            <person name="Kaul R."/>
            <person name="Swarbreck D."/>
            <person name="Dunham A."/>
            <person name="Scott C.E."/>
            <person name="Howe K.L."/>
            <person name="Woodfine K."/>
            <person name="Spencer C.C.A."/>
            <person name="Jones M.C."/>
            <person name="Gillson C."/>
            <person name="Searle S."/>
            <person name="Zhou Y."/>
            <person name="Kokocinski F."/>
            <person name="McDonald L."/>
            <person name="Evans R."/>
            <person name="Phillips K."/>
            <person name="Atkinson A."/>
            <person name="Cooper R."/>
            <person name="Jones C."/>
            <person name="Hall R.E."/>
            <person name="Andrews T.D."/>
            <person name="Lloyd C."/>
            <person name="Ainscough R."/>
            <person name="Almeida J.P."/>
            <person name="Ambrose K.D."/>
            <person name="Anderson F."/>
            <person name="Andrew R.W."/>
            <person name="Ashwell R.I.S."/>
            <person name="Aubin K."/>
            <person name="Babbage A.K."/>
            <person name="Bagguley C.L."/>
            <person name="Bailey J."/>
            <person name="Beasley H."/>
            <person name="Bethel G."/>
            <person name="Bird C.P."/>
            <person name="Bray-Allen S."/>
            <person name="Brown J.Y."/>
            <person name="Brown A.J."/>
            <person name="Buckley D."/>
            <person name="Burton J."/>
            <person name="Bye J."/>
            <person name="Carder C."/>
            <person name="Chapman J.C."/>
            <person name="Clark S.Y."/>
            <person name="Clarke G."/>
            <person name="Clee C."/>
            <person name="Cobley V."/>
            <person name="Collier R.E."/>
            <person name="Corby N."/>
            <person name="Coville G.J."/>
            <person name="Davies J."/>
            <person name="Deadman R."/>
            <person name="Dunn M."/>
            <person name="Earthrowl M."/>
            <person name="Ellington A.G."/>
            <person name="Errington H."/>
            <person name="Frankish A."/>
            <person name="Frankland J."/>
            <person name="French L."/>
            <person name="Garner P."/>
            <person name="Garnett J."/>
            <person name="Gay L."/>
            <person name="Ghori M.R.J."/>
            <person name="Gibson R."/>
            <person name="Gilby L.M."/>
            <person name="Gillett W."/>
            <person name="Glithero R.J."/>
            <person name="Grafham D.V."/>
            <person name="Griffiths C."/>
            <person name="Griffiths-Jones S."/>
            <person name="Grocock R."/>
            <person name="Hammond S."/>
            <person name="Harrison E.S.I."/>
            <person name="Hart E."/>
            <person name="Haugen E."/>
            <person name="Heath P.D."/>
            <person name="Holmes S."/>
            <person name="Holt K."/>
            <person name="Howden P.J."/>
            <person name="Hunt A.R."/>
            <person name="Hunt S.E."/>
            <person name="Hunter G."/>
            <person name="Isherwood J."/>
            <person name="James R."/>
            <person name="Johnson C."/>
            <person name="Johnson D."/>
            <person name="Joy A."/>
            <person name="Kay M."/>
            <person name="Kershaw J.K."/>
            <person name="Kibukawa M."/>
            <person name="Kimberley A.M."/>
            <person name="King A."/>
            <person name="Knights A.J."/>
            <person name="Lad H."/>
            <person name="Laird G."/>
            <person name="Lawlor S."/>
            <person name="Leongamornlert D.A."/>
            <person name="Lloyd D.M."/>
            <person name="Loveland J."/>
            <person name="Lovell J."/>
            <person name="Lush M.J."/>
            <person name="Lyne R."/>
            <person name="Martin S."/>
            <person name="Mashreghi-Mohammadi M."/>
            <person name="Matthews L."/>
            <person name="Matthews N.S.W."/>
            <person name="McLaren S."/>
            <person name="Milne S."/>
            <person name="Mistry S."/>
            <person name="Moore M.J.F."/>
            <person name="Nickerson T."/>
            <person name="O'Dell C.N."/>
            <person name="Oliver K."/>
            <person name="Palmeiri A."/>
            <person name="Palmer S.A."/>
            <person name="Parker A."/>
            <person name="Patel D."/>
            <person name="Pearce A.V."/>
            <person name="Peck A.I."/>
            <person name="Pelan S."/>
            <person name="Phelps K."/>
            <person name="Phillimore B.J."/>
            <person name="Plumb R."/>
            <person name="Rajan J."/>
            <person name="Raymond C."/>
            <person name="Rouse G."/>
            <person name="Saenphimmachak C."/>
            <person name="Sehra H.K."/>
            <person name="Sheridan E."/>
            <person name="Shownkeen R."/>
            <person name="Sims S."/>
            <person name="Skuce C.D."/>
            <person name="Smith M."/>
            <person name="Steward C."/>
            <person name="Subramanian S."/>
            <person name="Sycamore N."/>
            <person name="Tracey A."/>
            <person name="Tromans A."/>
            <person name="Van Helmond Z."/>
            <person name="Wall M."/>
            <person name="Wallis J.M."/>
            <person name="White S."/>
            <person name="Whitehead S.L."/>
            <person name="Wilkinson J.E."/>
            <person name="Willey D.L."/>
            <person name="Williams H."/>
            <person name="Wilming L."/>
            <person name="Wray P.W."/>
            <person name="Wu Z."/>
            <person name="Coulson A."/>
            <person name="Vaudin M."/>
            <person name="Sulston J.E."/>
            <person name="Durbin R.M."/>
            <person name="Hubbard T."/>
            <person name="Wooster R."/>
            <person name="Dunham I."/>
            <person name="Carter N.P."/>
            <person name="McVean G."/>
            <person name="Ross M.T."/>
            <person name="Harrow J."/>
            <person name="Olson M.V."/>
            <person name="Beck S."/>
            <person name="Rogers J."/>
            <person name="Bentley D.R."/>
        </authorList>
    </citation>
    <scope>NUCLEOTIDE SEQUENCE [LARGE SCALE GENOMIC DNA]</scope>
</reference>
<reference key="5">
    <citation type="journal article" date="2004" name="Genome Res.">
        <title>The status, quality, and expansion of the NIH full-length cDNA project: the Mammalian Gene Collection (MGC).</title>
        <authorList>
            <consortium name="The MGC Project Team"/>
        </authorList>
    </citation>
    <scope>NUCLEOTIDE SEQUENCE [LARGE SCALE MRNA] (ISOFORM 1)</scope>
    <scope>NUCLEOTIDE SEQUENCE [LARGE SCALE MRNA] OF 44-591 (ISOFORM 2)</scope>
    <source>
        <tissue>Placenta</tissue>
        <tissue>Skin</tissue>
    </source>
</reference>
<reference key="6">
    <citation type="journal article" date="2004" name="Nat. Genet.">
        <title>Complete sequencing and characterization of 21,243 full-length human cDNAs.</title>
        <authorList>
            <person name="Ota T."/>
            <person name="Suzuki Y."/>
            <person name="Nishikawa T."/>
            <person name="Otsuki T."/>
            <person name="Sugiyama T."/>
            <person name="Irie R."/>
            <person name="Wakamatsu A."/>
            <person name="Hayashi K."/>
            <person name="Sato H."/>
            <person name="Nagai K."/>
            <person name="Kimura K."/>
            <person name="Makita H."/>
            <person name="Sekine M."/>
            <person name="Obayashi M."/>
            <person name="Nishi T."/>
            <person name="Shibahara T."/>
            <person name="Tanaka T."/>
            <person name="Ishii S."/>
            <person name="Yamamoto J."/>
            <person name="Saito K."/>
            <person name="Kawai Y."/>
            <person name="Isono Y."/>
            <person name="Nakamura Y."/>
            <person name="Nagahari K."/>
            <person name="Murakami K."/>
            <person name="Yasuda T."/>
            <person name="Iwayanagi T."/>
            <person name="Wagatsuma M."/>
            <person name="Shiratori A."/>
            <person name="Sudo H."/>
            <person name="Hosoiri T."/>
            <person name="Kaku Y."/>
            <person name="Kodaira H."/>
            <person name="Kondo H."/>
            <person name="Sugawara M."/>
            <person name="Takahashi M."/>
            <person name="Kanda K."/>
            <person name="Yokoi T."/>
            <person name="Furuya T."/>
            <person name="Kikkawa E."/>
            <person name="Omura Y."/>
            <person name="Abe K."/>
            <person name="Kamihara K."/>
            <person name="Katsuta N."/>
            <person name="Sato K."/>
            <person name="Tanikawa M."/>
            <person name="Yamazaki M."/>
            <person name="Ninomiya K."/>
            <person name="Ishibashi T."/>
            <person name="Yamashita H."/>
            <person name="Murakawa K."/>
            <person name="Fujimori K."/>
            <person name="Tanai H."/>
            <person name="Kimata M."/>
            <person name="Watanabe M."/>
            <person name="Hiraoka S."/>
            <person name="Chiba Y."/>
            <person name="Ishida S."/>
            <person name="Ono Y."/>
            <person name="Takiguchi S."/>
            <person name="Watanabe S."/>
            <person name="Yosida M."/>
            <person name="Hotuta T."/>
            <person name="Kusano J."/>
            <person name="Kanehori K."/>
            <person name="Takahashi-Fujii A."/>
            <person name="Hara H."/>
            <person name="Tanase T.-O."/>
            <person name="Nomura Y."/>
            <person name="Togiya S."/>
            <person name="Komai F."/>
            <person name="Hara R."/>
            <person name="Takeuchi K."/>
            <person name="Arita M."/>
            <person name="Imose N."/>
            <person name="Musashino K."/>
            <person name="Yuuki H."/>
            <person name="Oshima A."/>
            <person name="Sasaki N."/>
            <person name="Aotsuka S."/>
            <person name="Yoshikawa Y."/>
            <person name="Matsunawa H."/>
            <person name="Ichihara T."/>
            <person name="Shiohata N."/>
            <person name="Sano S."/>
            <person name="Moriya S."/>
            <person name="Momiyama H."/>
            <person name="Satoh N."/>
            <person name="Takami S."/>
            <person name="Terashima Y."/>
            <person name="Suzuki O."/>
            <person name="Nakagawa S."/>
            <person name="Senoh A."/>
            <person name="Mizoguchi H."/>
            <person name="Goto Y."/>
            <person name="Shimizu F."/>
            <person name="Wakebe H."/>
            <person name="Hishigaki H."/>
            <person name="Watanabe T."/>
            <person name="Sugiyama A."/>
            <person name="Takemoto M."/>
            <person name="Kawakami B."/>
            <person name="Yamazaki M."/>
            <person name="Watanabe K."/>
            <person name="Kumagai A."/>
            <person name="Itakura S."/>
            <person name="Fukuzumi Y."/>
            <person name="Fujimori Y."/>
            <person name="Komiyama M."/>
            <person name="Tashiro H."/>
            <person name="Tanigami A."/>
            <person name="Fujiwara T."/>
            <person name="Ono T."/>
            <person name="Yamada K."/>
            <person name="Fujii Y."/>
            <person name="Ozaki K."/>
            <person name="Hirao M."/>
            <person name="Ohmori Y."/>
            <person name="Kawabata A."/>
            <person name="Hikiji T."/>
            <person name="Kobatake N."/>
            <person name="Inagaki H."/>
            <person name="Ikema Y."/>
            <person name="Okamoto S."/>
            <person name="Okitani R."/>
            <person name="Kawakami T."/>
            <person name="Noguchi S."/>
            <person name="Itoh T."/>
            <person name="Shigeta K."/>
            <person name="Senba T."/>
            <person name="Matsumura K."/>
            <person name="Nakajima Y."/>
            <person name="Mizuno T."/>
            <person name="Morinaga M."/>
            <person name="Sasaki M."/>
            <person name="Togashi T."/>
            <person name="Oyama M."/>
            <person name="Hata H."/>
            <person name="Watanabe M."/>
            <person name="Komatsu T."/>
            <person name="Mizushima-Sugano J."/>
            <person name="Satoh T."/>
            <person name="Shirai Y."/>
            <person name="Takahashi Y."/>
            <person name="Nakagawa K."/>
            <person name="Okumura K."/>
            <person name="Nagase T."/>
            <person name="Nomura N."/>
            <person name="Kikuchi H."/>
            <person name="Masuho Y."/>
            <person name="Yamashita R."/>
            <person name="Nakai K."/>
            <person name="Yada T."/>
            <person name="Nakamura Y."/>
            <person name="Ohara O."/>
            <person name="Isogai T."/>
            <person name="Sugano S."/>
        </authorList>
    </citation>
    <scope>NUCLEOTIDE SEQUENCE [LARGE SCALE MRNA] OF 85-591 (ISOFORM 2)</scope>
    <source>
        <tissue>Teratocarcinoma</tissue>
    </source>
</reference>
<reference key="7">
    <citation type="journal article" date="2007" name="BMC Genomics">
        <title>The full-ORF clone resource of the German cDNA consortium.</title>
        <authorList>
            <person name="Bechtel S."/>
            <person name="Rosenfelder H."/>
            <person name="Duda A."/>
            <person name="Schmidt C.P."/>
            <person name="Ernst U."/>
            <person name="Wellenreuther R."/>
            <person name="Mehrle A."/>
            <person name="Schuster C."/>
            <person name="Bahr A."/>
            <person name="Bloecker H."/>
            <person name="Heubner D."/>
            <person name="Hoerlein A."/>
            <person name="Michel G."/>
            <person name="Wedler H."/>
            <person name="Koehrer K."/>
            <person name="Ottenwaelder B."/>
            <person name="Poustka A."/>
            <person name="Wiemann S."/>
            <person name="Schupp I."/>
        </authorList>
    </citation>
    <scope>NUCLEOTIDE SEQUENCE [LARGE SCALE MRNA] OF 393-591 (ISOFORM 2)</scope>
    <source>
        <tissue>Testis</tissue>
    </source>
</reference>
<reference key="8">
    <citation type="journal article" date="2001" name="Curr. Biol.">
        <title>Cdc42 induces filopodia by promoting the formation of an IRSp53:Mena complex.</title>
        <authorList>
            <person name="Krugmann S."/>
            <person name="Jordens I."/>
            <person name="Gevaert K."/>
            <person name="Driessens M."/>
            <person name="Vandekerckhove J."/>
            <person name="Hall A."/>
        </authorList>
    </citation>
    <scope>PROTEIN SEQUENCE OF 23-47; 70-81; 123-145; 403-427; 484-499 AND 573-587</scope>
    <scope>FUNCTION</scope>
    <scope>INTERACTION WITH BAIAP2</scope>
</reference>
<reference key="9">
    <citation type="journal article" date="1997" name="EMBO J.">
        <title>A novel proline-rich motif present in ActA of Listeria monocytogenes and cytoskeletal proteins is the ligand for the EVH1 domain, a protein module present in the Ena/VASP family.</title>
        <authorList>
            <person name="Niebuhr K."/>
            <person name="Ebel F."/>
            <person name="Frank R."/>
            <person name="Reinhard M."/>
            <person name="Domann E."/>
            <person name="Carl U.D."/>
            <person name="Walter U."/>
            <person name="Gertler F.B."/>
            <person name="Wehland J."/>
            <person name="Chakraborty T."/>
        </authorList>
    </citation>
    <scope>INTERACTION WITH VCL; ZYX AND L.MONOCYTOGENES ACTA</scope>
</reference>
<reference key="10">
    <citation type="journal article" date="2000" name="J. Biol. Chem.">
        <title>Characterization of the interaction between zyxin and members of the Ena/vasodilator-stimulated phosphoprotein family of proteins.</title>
        <authorList>
            <person name="Drees B."/>
            <person name="Friederich E."/>
            <person name="Fradelizi J."/>
            <person name="Louvard D."/>
            <person name="Beckerle M.C."/>
            <person name="Golsteyn R.M."/>
        </authorList>
    </citation>
    <scope>INTERACTION WITH ZYX</scope>
</reference>
<reference key="11">
    <citation type="journal article" date="2003" name="Dev. Biol.">
        <title>Robo4 is a vascular-specific receptor that inhibits endothelial migration.</title>
        <authorList>
            <person name="Park K.W."/>
            <person name="Morrison C.M."/>
            <person name="Sorensen L.K."/>
            <person name="Jones C.A."/>
            <person name="Rao Y."/>
            <person name="Chien C.-B."/>
            <person name="Wu J.Y."/>
            <person name="Urness L.D."/>
            <person name="Li D.Y."/>
        </authorList>
    </citation>
    <scope>INTERACTION WITH ROBO4</scope>
</reference>
<reference key="12">
    <citation type="journal article" date="2004" name="Dev. Cell">
        <title>RIAM, an Ena/VASP and profilin ligand, interacts with Rap1-GTP and mediates Rap1-induced adhesion.</title>
        <authorList>
            <person name="Lafuente E.M."/>
            <person name="van Puijenbroek A.A."/>
            <person name="Krause M."/>
            <person name="Carman C.V."/>
            <person name="Freeman G.J."/>
            <person name="Berezovskaya A."/>
            <person name="Constantine E."/>
            <person name="Springer T.A."/>
            <person name="Gertler F.B."/>
            <person name="Boussiotis V.A."/>
        </authorList>
    </citation>
    <scope>INTERACTION WITH APBB1IP</scope>
    <source>
        <tissue>T-cell</tissue>
    </source>
</reference>
<reference key="13">
    <citation type="journal article" date="2004" name="Dev. Cell">
        <title>Lamellipodin, an Ena/VASP ligand, is implicated in the regulation of lamellipodial dynamics.</title>
        <authorList>
            <person name="Krause M."/>
            <person name="Leslie J.D."/>
            <person name="Stewart M."/>
            <person name="Lafuente E.M."/>
            <person name="Valderrama F."/>
            <person name="Jagannathan R."/>
            <person name="Strasser G.A."/>
            <person name="Rubinson D.A."/>
            <person name="Liu H."/>
            <person name="Way M."/>
            <person name="Yaffe M.B."/>
            <person name="Boussiotis V.A."/>
            <person name="Gertler F.B."/>
        </authorList>
    </citation>
    <scope>SUBCELLULAR LOCATION</scope>
</reference>
<reference key="14">
    <citation type="journal article" date="2007" name="Science">
        <title>ATM and ATR substrate analysis reveals extensive protein networks responsive to DNA damage.</title>
        <authorList>
            <person name="Matsuoka S."/>
            <person name="Ballif B.A."/>
            <person name="Smogorzewska A."/>
            <person name="McDonald E.R. III"/>
            <person name="Hurov K.E."/>
            <person name="Luo J."/>
            <person name="Bakalarski C.E."/>
            <person name="Zhao Z."/>
            <person name="Solimini N."/>
            <person name="Lerenthal Y."/>
            <person name="Shiloh Y."/>
            <person name="Gygi S.P."/>
            <person name="Elledge S.J."/>
        </authorList>
    </citation>
    <scope>PHOSPHORYLATION [LARGE SCALE ANALYSIS] AT SER-125</scope>
    <scope>IDENTIFICATION BY MASS SPECTROMETRY [LARGE SCALE ANALYSIS]</scope>
    <source>
        <tissue>Embryonic kidney</tissue>
    </source>
</reference>
<reference key="15">
    <citation type="journal article" date="2008" name="Proc. Natl. Acad. Sci. U.S.A.">
        <title>A quantitative atlas of mitotic phosphorylation.</title>
        <authorList>
            <person name="Dephoure N."/>
            <person name="Zhou C."/>
            <person name="Villen J."/>
            <person name="Beausoleil S.A."/>
            <person name="Bakalarski C.E."/>
            <person name="Elledge S.J."/>
            <person name="Gygi S.P."/>
        </authorList>
    </citation>
    <scope>PHOSPHORYLATION [LARGE SCALE ANALYSIS] AT SER-125; SER-506 AND SER-508</scope>
    <scope>PHOSPHORYLATION [LARGE SCALE ANALYSIS] AT THR-502 (ISOFORM 2)</scope>
    <scope>PHOSPHORYLATION [LARGE SCALE ANALYSIS] AT THR-465 (ISOFORM 3)</scope>
    <scope>IDENTIFICATION BY MASS SPECTROMETRY [LARGE SCALE ANALYSIS]</scope>
    <source>
        <tissue>Cervix carcinoma</tissue>
    </source>
</reference>
<reference key="16">
    <citation type="journal article" date="2010" name="Sci. Signal.">
        <title>Quantitative phosphoproteomics reveals widespread full phosphorylation site occupancy during mitosis.</title>
        <authorList>
            <person name="Olsen J.V."/>
            <person name="Vermeulen M."/>
            <person name="Santamaria A."/>
            <person name="Kumar C."/>
            <person name="Miller M.L."/>
            <person name="Jensen L.J."/>
            <person name="Gnad F."/>
            <person name="Cox J."/>
            <person name="Jensen T.S."/>
            <person name="Nigg E.A."/>
            <person name="Brunak S."/>
            <person name="Mann M."/>
        </authorList>
    </citation>
    <scope>PHOSPHORYLATION [LARGE SCALE ANALYSIS] AT SER-125; SER-506 AND SER-508</scope>
    <scope>IDENTIFICATION BY MASS SPECTROMETRY [LARGE SCALE ANALYSIS]</scope>
    <source>
        <tissue>Cervix carcinoma</tissue>
    </source>
</reference>
<reference key="17">
    <citation type="journal article" date="2011" name="BMC Syst. Biol.">
        <title>Initial characterization of the human central proteome.</title>
        <authorList>
            <person name="Burkard T.R."/>
            <person name="Planyavsky M."/>
            <person name="Kaupe I."/>
            <person name="Breitwieser F.P."/>
            <person name="Buerckstuemmer T."/>
            <person name="Bennett K.L."/>
            <person name="Superti-Furga G."/>
            <person name="Colinge J."/>
        </authorList>
    </citation>
    <scope>IDENTIFICATION BY MASS SPECTROMETRY [LARGE SCALE ANALYSIS]</scope>
</reference>
<reference key="18">
    <citation type="journal article" date="2011" name="Sci. Signal.">
        <title>System-wide temporal characterization of the proteome and phosphoproteome of human embryonic stem cell differentiation.</title>
        <authorList>
            <person name="Rigbolt K.T."/>
            <person name="Prokhorova T.A."/>
            <person name="Akimov V."/>
            <person name="Henningsen J."/>
            <person name="Johansen P.T."/>
            <person name="Kratchmarova I."/>
            <person name="Kassem M."/>
            <person name="Mann M."/>
            <person name="Olsen J.V."/>
            <person name="Blagoev B."/>
        </authorList>
    </citation>
    <scope>PHOSPHORYLATION [LARGE SCALE ANALYSIS] AT SER-512 (ISOFORM 2)</scope>
    <scope>PHOSPHORYLATION [LARGE SCALE ANALYSIS] AT SER-475 (ISOFORM 3)</scope>
    <scope>IDENTIFICATION BY MASS SPECTROMETRY [LARGE SCALE ANALYSIS]</scope>
</reference>
<reference key="19">
    <citation type="journal article" date="2013" name="J. Proteome Res.">
        <title>Toward a comprehensive characterization of a human cancer cell phosphoproteome.</title>
        <authorList>
            <person name="Zhou H."/>
            <person name="Di Palma S."/>
            <person name="Preisinger C."/>
            <person name="Peng M."/>
            <person name="Polat A.N."/>
            <person name="Heck A.J."/>
            <person name="Mohammed S."/>
        </authorList>
    </citation>
    <scope>PHOSPHORYLATION [LARGE SCALE ANALYSIS] AT SER-125</scope>
    <scope>IDENTIFICATION BY MASS SPECTROMETRY [LARGE SCALE ANALYSIS]</scope>
    <source>
        <tissue>Cervix carcinoma</tissue>
    </source>
</reference>
<reference key="20">
    <citation type="journal article" date="2014" name="J. Proteomics">
        <title>An enzyme assisted RP-RPLC approach for in-depth analysis of human liver phosphoproteome.</title>
        <authorList>
            <person name="Bian Y."/>
            <person name="Song C."/>
            <person name="Cheng K."/>
            <person name="Dong M."/>
            <person name="Wang F."/>
            <person name="Huang J."/>
            <person name="Sun D."/>
            <person name="Wang L."/>
            <person name="Ye M."/>
            <person name="Zou H."/>
        </authorList>
    </citation>
    <scope>PHOSPHORYLATION [LARGE SCALE ANALYSIS] AT SER-508 (ISOFORM 2)</scope>
    <scope>PHOSPHORYLATION [LARGE SCALE ANALYSIS] AT SER-471 (ISOFORM 3)</scope>
    <scope>IDENTIFICATION BY MASS SPECTROMETRY [LARGE SCALE ANALYSIS]</scope>
    <source>
        <tissue>Liver</tissue>
    </source>
</reference>
<reference key="21">
    <citation type="journal article" date="2007" name="J. Mol. Biol.">
        <title>Structural basis for polyproline recognition by the FE65 WW domain.</title>
        <authorList>
            <person name="Meiyappan M."/>
            <person name="Birrane G."/>
            <person name="Ladias J.A.A."/>
        </authorList>
    </citation>
    <scope>X-RAY CRYSTALLOGRAPHY (1.33 ANGSTROMS) OF 347-356 IN COMPLEX WITH APBB1</scope>
</reference>
<reference key="22">
    <citation type="journal article" date="2007" name="Mol. Cell">
        <title>Tes, a specific Mena interacting partner, breaks the rules for EVH1 binding.</title>
        <authorList>
            <person name="Boeda B."/>
            <person name="Briggs D.C."/>
            <person name="Higgins T."/>
            <person name="Garvalov B.K."/>
            <person name="Fadden A.J."/>
            <person name="McDonald N.Q."/>
            <person name="Way M."/>
        </authorList>
    </citation>
    <scope>X-RAY CRYSTALLOGRAPHY (2.35 ANGSTROMS) OF 1-113 IN COMPLEX WITH TES</scope>
    <scope>INTERACTION WITH ZYX</scope>
    <scope>FUNCTION</scope>
    <scope>SUBCELLULAR LOCATION</scope>
</reference>
<reference key="23">
    <citation type="journal article" date="2011" name="J. Biol. Chem.">
        <title>Molecular recognition of the Tes LIM2-3 domains by the actin-related protein Arp7A.</title>
        <authorList>
            <person name="Boeda B."/>
            <person name="Knowles P.P."/>
            <person name="Briggs D.C."/>
            <person name="Murray-Rust J."/>
            <person name="Soriano E."/>
            <person name="Garvalov B.K."/>
            <person name="McDonald N.Q."/>
            <person name="Way M."/>
        </authorList>
    </citation>
    <scope>X-RAY CRYSTALLOGRAPHY (2.62 ANGSTROMS) OF 1-116 IN COMPLEX WITH TES AND ACTL7A</scope>
</reference>
<proteinExistence type="evidence at protein level"/>
<evidence type="ECO:0000250" key="1"/>
<evidence type="ECO:0000250" key="2">
    <source>
        <dbReference type="UniProtKB" id="Q03173"/>
    </source>
</evidence>
<evidence type="ECO:0000255" key="3"/>
<evidence type="ECO:0000255" key="4">
    <source>
        <dbReference type="PROSITE-ProRule" id="PRU00410"/>
    </source>
</evidence>
<evidence type="ECO:0000256" key="5">
    <source>
        <dbReference type="SAM" id="MobiDB-lite"/>
    </source>
</evidence>
<evidence type="ECO:0000269" key="6">
    <source>
    </source>
</evidence>
<evidence type="ECO:0000269" key="7">
    <source>
    </source>
</evidence>
<evidence type="ECO:0000269" key="8">
    <source>
    </source>
</evidence>
<evidence type="ECO:0000269" key="9">
    <source>
    </source>
</evidence>
<evidence type="ECO:0000269" key="10">
    <source>
    </source>
</evidence>
<evidence type="ECO:0000269" key="11">
    <source>
    </source>
</evidence>
<evidence type="ECO:0000269" key="12">
    <source>
    </source>
</evidence>
<evidence type="ECO:0000269" key="13">
    <source>
    </source>
</evidence>
<evidence type="ECO:0000269" key="14">
    <source>
    </source>
</evidence>
<evidence type="ECO:0000303" key="15">
    <source>
    </source>
</evidence>
<evidence type="ECO:0000303" key="16">
    <source>
    </source>
</evidence>
<evidence type="ECO:0000303" key="17">
    <source>
    </source>
</evidence>
<evidence type="ECO:0000303" key="18">
    <source>
    </source>
</evidence>
<evidence type="ECO:0000303" key="19">
    <source ref="1"/>
</evidence>
<evidence type="ECO:0000305" key="20"/>
<evidence type="ECO:0007744" key="21">
    <source>
    </source>
</evidence>
<evidence type="ECO:0007744" key="22">
    <source>
    </source>
</evidence>
<evidence type="ECO:0007744" key="23">
    <source>
    </source>
</evidence>
<evidence type="ECO:0007744" key="24">
    <source>
    </source>
</evidence>
<evidence type="ECO:0007744" key="25">
    <source>
    </source>
</evidence>
<evidence type="ECO:0007744" key="26">
    <source>
    </source>
</evidence>
<evidence type="ECO:0007829" key="27">
    <source>
        <dbReference type="PDB" id="7A5M"/>
    </source>
</evidence>
<evidence type="ECO:0007829" key="28">
    <source>
        <dbReference type="PDB" id="7LXE"/>
    </source>
</evidence>
<accession>Q8N8S7</accession>
<accession>D0PQI2</accession>
<accession>Q502W5</accession>
<accession>Q5T5M7</accession>
<accession>Q5VTQ9</accession>
<accession>Q5VTR0</accession>
<accession>Q9NVF3</accession>
<accession>Q9UFB8</accession>
<comment type="function">
    <text evidence="1 7 12">Ena/VASP proteins are actin-associated proteins involved in a range of processes dependent on cytoskeleton remodeling and cell polarity such as axon guidance and lamellipodial and filopodial dynamics in migrating cells. ENAH induces the formation of F-actin rich outgrowths in fibroblasts. Acts synergistically with BAIAP2-alpha and downstream of NTN1 to promote filipodia formation (By similarity).</text>
</comment>
<comment type="subunit">
    <text evidence="2 6 7 8 10 11 12 13 14">Homotetramer (By similarity). Interacts with APBB1IP, APBB1, PFN1 and ROBO4 (PubMed:12941633, PubMed:15469846, PubMed:17686488). Isoforms, containing the polyproline-rich regions with PPLP motifs, bind the WW domain of APBB1IP (PubMed:15469846). Isoforms, containing the PPSY motif, bind, in vitro, to the WW2 and WW3 domains of NEDD4 and to the WW1 domain of YAP1 (By similarity). Binds the SH3 domain of BAIAP2-alpha but only after the autoinhibitory region of BAIAP2-alpha has been blocked by interaction with CDC42 (PubMed:11696321, PubMed:18158903). Interacts, via the EVH1/WH1 domain, with the Pro-rich domains from VCL, ZYX and Listeria monocytogenes actA and with TES (via LIM domains) (PubMed:18158903, PubMed:21278383, PubMed:9312002). The TES LIM domain and the Pro-rich domains from VCL or ZYX compete for the same binding site (PubMed:9312002). Interaction with ZYX is important for targeting ENAH to focal adhesions and enhances production of actin-rich structures at the apical surface of cells (PubMed:10801818). Interacts, through the Pro-rich region, with the C-terminal SH3 domain of DNMPB (By similarity). Binds GPHN (By similarity). Interacts with FAT1 (via EVH1 domains) (By similarity). Heterotrimer with TES and ACTL7A (PubMed:21278383). Interacts with PRPF40A (By similarity).</text>
</comment>
<comment type="interaction">
    <interactant intactId="EBI-2834410">
        <id>Q8N8S7</id>
    </interactant>
    <interactant intactId="EBI-1171918">
        <id>Q14517</id>
        <label>FAT1</label>
    </interactant>
    <organismsDiffer>false</organismsDiffer>
    <experiments>2</experiments>
</comment>
<comment type="interaction">
    <interactant intactId="EBI-2834410">
        <id>Q8N8S7</id>
    </interactant>
    <interactant intactId="EBI-750109">
        <id>Q9NYB0</id>
        <label>TERF2IP</label>
    </interactant>
    <organismsDiffer>false</organismsDiffer>
    <experiments>2</experiments>
</comment>
<comment type="interaction">
    <interactant intactId="EBI-2834410">
        <id>Q8N8S7</id>
    </interactant>
    <interactant intactId="EBI-2561654">
        <id>Q9UGI8</id>
        <label>TES</label>
    </interactant>
    <organismsDiffer>false</organismsDiffer>
    <experiments>2</experiments>
</comment>
<comment type="interaction">
    <interactant intactId="EBI-2834410">
        <id>Q8N8S7</id>
    </interactant>
    <interactant intactId="EBI-444225">
        <id>Q15942</id>
        <label>ZYX</label>
    </interactant>
    <organismsDiffer>false</organismsDiffer>
    <experiments>2</experiments>
</comment>
<comment type="subcellular location">
    <subcellularLocation>
        <location>Cytoplasm</location>
    </subcellularLocation>
    <subcellularLocation>
        <location evidence="1">Cytoplasm</location>
        <location evidence="1">Cytoskeleton</location>
    </subcellularLocation>
    <subcellularLocation>
        <location evidence="1">Cell projection</location>
        <location evidence="1">Lamellipodium</location>
    </subcellularLocation>
    <subcellularLocation>
        <location evidence="1">Cell projection</location>
        <location evidence="1">Filopodium</location>
    </subcellularLocation>
    <subcellularLocation>
        <location evidence="1">Synapse</location>
    </subcellularLocation>
    <subcellularLocation>
        <location>Cell junction</location>
        <location>Focal adhesion</location>
    </subcellularLocation>
    <text evidence="1">Targeted to the leading edge of lamellipodia and filopodia by MRL family members. Colocalizes at filopodial tips with a number of other proteins including vinculin and zyxlin. Colocalizes with N-WASP at the leading edge. Colocalizes with GPHN and PFN at synapses (By similarity).</text>
</comment>
<comment type="alternative products">
    <event type="alternative splicing"/>
    <isoform>
        <id>Q8N8S7-1</id>
        <name>1</name>
        <sequence type="displayed"/>
    </isoform>
    <isoform>
        <id>Q8N8S7-2</id>
        <name>2</name>
        <sequence type="described" ref="VSP_010564"/>
    </isoform>
    <isoform>
        <id>Q8N8S7-3</id>
        <name>3</name>
        <name>Deltav6</name>
        <sequence type="described" ref="VSP_053772 VSP_053773"/>
    </isoform>
</comment>
<comment type="tissue specificity">
    <text evidence="9">Expressed in myoepithelia of parotid, breast, bronchial glands and sweat glands. Expressed in colon-rectum muscolaris mucosae epithelium, pancreas acinar ductal epithelium, endometrium epithelium, prostate fibromuscolar stroma and placenta vascular media. Overexpressed in a majority of breast cancer cell lines and primary breast tumor lesions.</text>
</comment>
<comment type="domain">
    <text>The EVH2 domain is comprised of 3 regions. Block A is a thymosin-like domain required for G-actin binding. The KLKR motif within this block is essential for the G-actin binding and for actin polymerization. Block B is required for F-actin binding and subcellular location, and Block C for tetramerization.</text>
</comment>
<comment type="PTM">
    <text evidence="1">NTN1-induced PKA phosphorylation on Ser-265 directly parallels the formation of filopodial protrusions.</text>
</comment>
<comment type="miscellaneous">
    <text evidence="1">Required to transform actin polymerization into active movement for the propulsive force of Listeria monocytogenes.</text>
</comment>
<comment type="miscellaneous">
    <molecule>Isoform 3</molecule>
    <text evidence="20">Expression restricted to invasive cancer cells.</text>
</comment>
<comment type="similarity">
    <text evidence="20">Belongs to the Ena/VASP family.</text>
</comment>
<comment type="sequence caution" evidence="20">
    <conflict type="erroneous initiation">
        <sequence resource="EMBL-CDS" id="BAA91799"/>
    </conflict>
    <text>Truncated N-terminus.</text>
</comment>
<comment type="sequence caution" evidence="20">
    <conflict type="erroneous initiation">
        <sequence resource="EMBL-CDS" id="BAC04736"/>
    </conflict>
    <text>Truncated N-terminus.</text>
</comment>
<comment type="online information" name="Atlas of Genetics and Cytogenetics in Oncology and Haematology">
    <link uri="https://atlasgeneticsoncology.org/gene/44148/ENAH"/>
</comment>
<keyword id="KW-0002">3D-structure</keyword>
<keyword id="KW-0009">Actin-binding</keyword>
<keyword id="KW-0025">Alternative splicing</keyword>
<keyword id="KW-0965">Cell junction</keyword>
<keyword id="KW-0966">Cell projection</keyword>
<keyword id="KW-0175">Coiled coil</keyword>
<keyword id="KW-0963">Cytoplasm</keyword>
<keyword id="KW-0206">Cytoskeleton</keyword>
<keyword id="KW-0903">Direct protein sequencing</keyword>
<keyword id="KW-0597">Phosphoprotein</keyword>
<keyword id="KW-1267">Proteomics identification</keyword>
<keyword id="KW-1185">Reference proteome</keyword>
<keyword id="KW-0677">Repeat</keyword>
<keyword id="KW-0729">SH3-binding</keyword>
<keyword id="KW-0770">Synapse</keyword>
<gene>
    <name type="primary">ENAH</name>
    <name type="synonym">MENA</name>
</gene>